<organism>
    <name type="scientific">Aliivibrio fischeri (strain ATCC 700601 / ES114)</name>
    <name type="common">Vibrio fischeri</name>
    <dbReference type="NCBI Taxonomy" id="312309"/>
    <lineage>
        <taxon>Bacteria</taxon>
        <taxon>Pseudomonadati</taxon>
        <taxon>Pseudomonadota</taxon>
        <taxon>Gammaproteobacteria</taxon>
        <taxon>Vibrionales</taxon>
        <taxon>Vibrionaceae</taxon>
        <taxon>Aliivibrio</taxon>
    </lineage>
</organism>
<accession>Q5E6B6</accession>
<gene>
    <name evidence="1" type="primary">rnfA</name>
    <name type="ordered locus">VF_0935</name>
</gene>
<feature type="chain" id="PRO_1000013562" description="Ion-translocating oxidoreductase complex subunit A">
    <location>
        <begin position="1"/>
        <end position="193"/>
    </location>
</feature>
<feature type="transmembrane region" description="Helical" evidence="1">
    <location>
        <begin position="5"/>
        <end position="25"/>
    </location>
</feature>
<feature type="transmembrane region" description="Helical" evidence="1">
    <location>
        <begin position="39"/>
        <end position="59"/>
    </location>
</feature>
<feature type="transmembrane region" description="Helical" evidence="1">
    <location>
        <begin position="67"/>
        <end position="87"/>
    </location>
</feature>
<feature type="transmembrane region" description="Helical" evidence="1">
    <location>
        <begin position="102"/>
        <end position="122"/>
    </location>
</feature>
<feature type="transmembrane region" description="Helical" evidence="1">
    <location>
        <begin position="134"/>
        <end position="154"/>
    </location>
</feature>
<feature type="transmembrane region" description="Helical" evidence="1">
    <location>
        <begin position="171"/>
        <end position="191"/>
    </location>
</feature>
<keyword id="KW-0997">Cell inner membrane</keyword>
<keyword id="KW-1003">Cell membrane</keyword>
<keyword id="KW-0249">Electron transport</keyword>
<keyword id="KW-0472">Membrane</keyword>
<keyword id="KW-1185">Reference proteome</keyword>
<keyword id="KW-1278">Translocase</keyword>
<keyword id="KW-0812">Transmembrane</keyword>
<keyword id="KW-1133">Transmembrane helix</keyword>
<keyword id="KW-0813">Transport</keyword>
<evidence type="ECO:0000255" key="1">
    <source>
        <dbReference type="HAMAP-Rule" id="MF_00459"/>
    </source>
</evidence>
<comment type="function">
    <text evidence="1">Part of a membrane-bound complex that couples electron transfer with translocation of ions across the membrane.</text>
</comment>
<comment type="subunit">
    <text evidence="1">The complex is composed of six subunits: RnfA, RnfB, RnfC, RnfD, RnfE and RnfG.</text>
</comment>
<comment type="subcellular location">
    <subcellularLocation>
        <location evidence="1">Cell inner membrane</location>
        <topology evidence="1">Multi-pass membrane protein</topology>
    </subcellularLocation>
</comment>
<comment type="similarity">
    <text evidence="1">Belongs to the NqrDE/RnfAE family.</text>
</comment>
<protein>
    <recommendedName>
        <fullName evidence="1">Ion-translocating oxidoreductase complex subunit A</fullName>
        <ecNumber evidence="1">7.-.-.-</ecNumber>
    </recommendedName>
    <alternativeName>
        <fullName evidence="1">Rnf electron transport complex subunit A</fullName>
    </alternativeName>
</protein>
<name>RNFA_ALIF1</name>
<dbReference type="EC" id="7.-.-.-" evidence="1"/>
<dbReference type="EMBL" id="CP000020">
    <property type="protein sequence ID" value="AAW85430.1"/>
    <property type="molecule type" value="Genomic_DNA"/>
</dbReference>
<dbReference type="RefSeq" id="YP_204318.1">
    <property type="nucleotide sequence ID" value="NC_006840.2"/>
</dbReference>
<dbReference type="SMR" id="Q5E6B6"/>
<dbReference type="STRING" id="312309.VF_0935"/>
<dbReference type="EnsemblBacteria" id="AAW85430">
    <property type="protein sequence ID" value="AAW85430"/>
    <property type="gene ID" value="VF_0935"/>
</dbReference>
<dbReference type="GeneID" id="54163603"/>
<dbReference type="KEGG" id="vfi:VF_0935"/>
<dbReference type="PATRIC" id="fig|312309.11.peg.933"/>
<dbReference type="eggNOG" id="COG4657">
    <property type="taxonomic scope" value="Bacteria"/>
</dbReference>
<dbReference type="HOGENOM" id="CLU_095255_1_0_6"/>
<dbReference type="OrthoDB" id="9803631at2"/>
<dbReference type="Proteomes" id="UP000000537">
    <property type="component" value="Chromosome I"/>
</dbReference>
<dbReference type="GO" id="GO:0005886">
    <property type="term" value="C:plasma membrane"/>
    <property type="evidence" value="ECO:0007669"/>
    <property type="project" value="UniProtKB-SubCell"/>
</dbReference>
<dbReference type="GO" id="GO:0022900">
    <property type="term" value="P:electron transport chain"/>
    <property type="evidence" value="ECO:0007669"/>
    <property type="project" value="UniProtKB-UniRule"/>
</dbReference>
<dbReference type="HAMAP" id="MF_00459">
    <property type="entry name" value="RsxA_RnfA"/>
    <property type="match status" value="1"/>
</dbReference>
<dbReference type="InterPro" id="IPR011293">
    <property type="entry name" value="Ion_transpt_RnfA/RsxA"/>
</dbReference>
<dbReference type="InterPro" id="IPR003667">
    <property type="entry name" value="NqrDE/RnfAE"/>
</dbReference>
<dbReference type="InterPro" id="IPR050133">
    <property type="entry name" value="NqrDE/RnfAE_oxidrdctase"/>
</dbReference>
<dbReference type="NCBIfam" id="NF003481">
    <property type="entry name" value="PRK05151.1"/>
    <property type="match status" value="1"/>
</dbReference>
<dbReference type="NCBIfam" id="TIGR01943">
    <property type="entry name" value="rnfA"/>
    <property type="match status" value="1"/>
</dbReference>
<dbReference type="PANTHER" id="PTHR30335">
    <property type="entry name" value="INTEGRAL MEMBRANE PROTEIN OF SOXR-REDUCING COMPLEX"/>
    <property type="match status" value="1"/>
</dbReference>
<dbReference type="PANTHER" id="PTHR30335:SF0">
    <property type="entry name" value="ION-TRANSLOCATING OXIDOREDUCTASE COMPLEX SUBUNIT A"/>
    <property type="match status" value="1"/>
</dbReference>
<dbReference type="Pfam" id="PF02508">
    <property type="entry name" value="Rnf-Nqr"/>
    <property type="match status" value="1"/>
</dbReference>
<dbReference type="PIRSF" id="PIRSF006102">
    <property type="entry name" value="NQR_DE"/>
    <property type="match status" value="1"/>
</dbReference>
<reference key="1">
    <citation type="journal article" date="2005" name="Proc. Natl. Acad. Sci. U.S.A.">
        <title>Complete genome sequence of Vibrio fischeri: a symbiotic bacterium with pathogenic congeners.</title>
        <authorList>
            <person name="Ruby E.G."/>
            <person name="Urbanowski M."/>
            <person name="Campbell J."/>
            <person name="Dunn A."/>
            <person name="Faini M."/>
            <person name="Gunsalus R."/>
            <person name="Lostroh P."/>
            <person name="Lupp C."/>
            <person name="McCann J."/>
            <person name="Millikan D."/>
            <person name="Schaefer A."/>
            <person name="Stabb E."/>
            <person name="Stevens A."/>
            <person name="Visick K."/>
            <person name="Whistler C."/>
            <person name="Greenberg E.P."/>
        </authorList>
    </citation>
    <scope>NUCLEOTIDE SEQUENCE [LARGE SCALE GENOMIC DNA]</scope>
    <source>
        <strain>ATCC 700601 / ES114</strain>
    </source>
</reference>
<sequence>MTEYLLLLIGTVLVNNFVLVKFLGLCPFMGVSKKLESAIGMGLATTFVLTLASVCSYLVETYILSPLGIEYLRTMSFILVIAVVVQFTEMVVHKTSPTLYRVLGIFLPLITTNCAVLGVALLNVTENHNFVESIIYGFGAAVGFSLVLILFSAMRERIAAADVPLPFKGASIAMITAGLMSLAFMGFTGLVKL</sequence>
<proteinExistence type="inferred from homology"/>